<organism>
    <name type="scientific">Brucella suis (strain ATCC 23445 / NCTC 10510)</name>
    <dbReference type="NCBI Taxonomy" id="470137"/>
    <lineage>
        <taxon>Bacteria</taxon>
        <taxon>Pseudomonadati</taxon>
        <taxon>Pseudomonadota</taxon>
        <taxon>Alphaproteobacteria</taxon>
        <taxon>Hyphomicrobiales</taxon>
        <taxon>Brucellaceae</taxon>
        <taxon>Brucella/Ochrobactrum group</taxon>
        <taxon>Brucella</taxon>
    </lineage>
</organism>
<comment type="function">
    <text evidence="1">Catalyzes the reversible isomerization of glucose-6-phosphate to fructose-6-phosphate.</text>
</comment>
<comment type="catalytic activity">
    <reaction evidence="1">
        <text>alpha-D-glucose 6-phosphate = beta-D-fructose 6-phosphate</text>
        <dbReference type="Rhea" id="RHEA:11816"/>
        <dbReference type="ChEBI" id="CHEBI:57634"/>
        <dbReference type="ChEBI" id="CHEBI:58225"/>
        <dbReference type="EC" id="5.3.1.9"/>
    </reaction>
</comment>
<comment type="pathway">
    <text evidence="1">Carbohydrate biosynthesis; gluconeogenesis.</text>
</comment>
<comment type="pathway">
    <text evidence="1">Carbohydrate degradation; glycolysis; D-glyceraldehyde 3-phosphate and glycerone phosphate from D-glucose: step 2/4.</text>
</comment>
<comment type="subcellular location">
    <subcellularLocation>
        <location evidence="1">Cytoplasm</location>
    </subcellularLocation>
</comment>
<comment type="similarity">
    <text evidence="1">Belongs to the GPI family.</text>
</comment>
<reference key="1">
    <citation type="submission" date="2007-12" db="EMBL/GenBank/DDBJ databases">
        <title>Brucella suis ATCC 23445 whole genome shotgun sequencing project.</title>
        <authorList>
            <person name="Setubal J.C."/>
            <person name="Bowns C."/>
            <person name="Boyle S."/>
            <person name="Crasta O.R."/>
            <person name="Czar M.J."/>
            <person name="Dharmanolla C."/>
            <person name="Gillespie J.J."/>
            <person name="Kenyon R.W."/>
            <person name="Lu J."/>
            <person name="Mane S."/>
            <person name="Mohapatra S."/>
            <person name="Nagrani S."/>
            <person name="Purkayastha A."/>
            <person name="Rajasimha H.K."/>
            <person name="Shallom J.M."/>
            <person name="Shallom S."/>
            <person name="Shukla M."/>
            <person name="Snyder E.E."/>
            <person name="Sobral B.W."/>
            <person name="Wattam A.R."/>
            <person name="Will R."/>
            <person name="Williams K."/>
            <person name="Yoo H."/>
            <person name="Bruce D."/>
            <person name="Detter C."/>
            <person name="Munk C."/>
            <person name="Brettin T.S."/>
        </authorList>
    </citation>
    <scope>NUCLEOTIDE SEQUENCE [LARGE SCALE GENOMIC DNA]</scope>
    <source>
        <strain>ATCC 23445 / NCTC 10510</strain>
    </source>
</reference>
<keyword id="KW-0963">Cytoplasm</keyword>
<keyword id="KW-0312">Gluconeogenesis</keyword>
<keyword id="KW-0324">Glycolysis</keyword>
<keyword id="KW-0413">Isomerase</keyword>
<name>G6PI_BRUSI</name>
<evidence type="ECO:0000255" key="1">
    <source>
        <dbReference type="HAMAP-Rule" id="MF_00473"/>
    </source>
</evidence>
<feature type="chain" id="PRO_1000081232" description="Glucose-6-phosphate isomerase">
    <location>
        <begin position="1"/>
        <end position="549"/>
    </location>
</feature>
<feature type="active site" description="Proton donor" evidence="1">
    <location>
        <position position="353"/>
    </location>
</feature>
<feature type="active site" evidence="1">
    <location>
        <position position="384"/>
    </location>
</feature>
<feature type="active site" evidence="1">
    <location>
        <position position="513"/>
    </location>
</feature>
<sequence>MARDATKLEATVAKLKKHWAESAPRDMRAAFSADPGRFGRYSLCLDDLLFDWSKCRVNDETMALLKELAVAADVEGRRAAMFAGEHINNTEDRVVLHVALRDTSSKEVLVDGHNVLPDVKHVLDRMAAFADGIRSGALKGATGRKITDIVNIGIGGSDLGPVMATLALAPYHDGPRAHFVSNIDGAHIADTLSPLDPASTLIIVASKTFTTIETMTNAQTARKWVADTLGEAAVGAHFAAVSTALDKVAAFGIPEDRVFGFWDWVGGRYSVWSAIGLPVMIAVGPDNFRKFLAGAHAMDVHFRDAPLEKNLPVMLGLIGYWHRAICGYGSRAIIPYDQRLSRLPAYLQQLDMESNGKSVTLDGKPVSGPTGPVVWGEPGTNGQHAFFQLLHQGTDTIPLEFIVAAKGHEPTLDHQHEMLMANCLAQSEALMKGRTLDEARAQLQAKNLPASQVERIAPHRVFSGNRPSLTLIHDMLDPYALGRLIALYEHRVFVEAQIFGINAFDQWGVELGKELATELLPVVSGKEGASGRDASTQGLVAHLHARRKA</sequence>
<proteinExistence type="inferred from homology"/>
<gene>
    <name evidence="1" type="primary">pgi</name>
    <name type="ordered locus">BSUIS_A0310</name>
</gene>
<accession>B0CJR3</accession>
<dbReference type="EC" id="5.3.1.9" evidence="1"/>
<dbReference type="EMBL" id="CP000911">
    <property type="protein sequence ID" value="ABY37404.1"/>
    <property type="molecule type" value="Genomic_DNA"/>
</dbReference>
<dbReference type="RefSeq" id="WP_012246907.1">
    <property type="nucleotide sequence ID" value="NC_010169.1"/>
</dbReference>
<dbReference type="SMR" id="B0CJR3"/>
<dbReference type="KEGG" id="bmt:BSUIS_A0310"/>
<dbReference type="HOGENOM" id="CLU_017947_3_1_5"/>
<dbReference type="UniPathway" id="UPA00109">
    <property type="reaction ID" value="UER00181"/>
</dbReference>
<dbReference type="UniPathway" id="UPA00138"/>
<dbReference type="PRO" id="PR:B0CJR3"/>
<dbReference type="Proteomes" id="UP000008545">
    <property type="component" value="Chromosome I"/>
</dbReference>
<dbReference type="GO" id="GO:0005829">
    <property type="term" value="C:cytosol"/>
    <property type="evidence" value="ECO:0007669"/>
    <property type="project" value="TreeGrafter"/>
</dbReference>
<dbReference type="GO" id="GO:0097367">
    <property type="term" value="F:carbohydrate derivative binding"/>
    <property type="evidence" value="ECO:0007669"/>
    <property type="project" value="InterPro"/>
</dbReference>
<dbReference type="GO" id="GO:0004347">
    <property type="term" value="F:glucose-6-phosphate isomerase activity"/>
    <property type="evidence" value="ECO:0007669"/>
    <property type="project" value="UniProtKB-UniRule"/>
</dbReference>
<dbReference type="GO" id="GO:0048029">
    <property type="term" value="F:monosaccharide binding"/>
    <property type="evidence" value="ECO:0007669"/>
    <property type="project" value="TreeGrafter"/>
</dbReference>
<dbReference type="GO" id="GO:0006094">
    <property type="term" value="P:gluconeogenesis"/>
    <property type="evidence" value="ECO:0007669"/>
    <property type="project" value="UniProtKB-UniRule"/>
</dbReference>
<dbReference type="GO" id="GO:0051156">
    <property type="term" value="P:glucose 6-phosphate metabolic process"/>
    <property type="evidence" value="ECO:0007669"/>
    <property type="project" value="TreeGrafter"/>
</dbReference>
<dbReference type="GO" id="GO:0006096">
    <property type="term" value="P:glycolytic process"/>
    <property type="evidence" value="ECO:0007669"/>
    <property type="project" value="UniProtKB-UniRule"/>
</dbReference>
<dbReference type="CDD" id="cd05015">
    <property type="entry name" value="SIS_PGI_1"/>
    <property type="match status" value="1"/>
</dbReference>
<dbReference type="CDD" id="cd05016">
    <property type="entry name" value="SIS_PGI_2"/>
    <property type="match status" value="1"/>
</dbReference>
<dbReference type="FunFam" id="3.40.50.10490:FF:000018">
    <property type="entry name" value="Glucose-6-phosphate isomerase"/>
    <property type="match status" value="1"/>
</dbReference>
<dbReference type="Gene3D" id="1.10.1390.10">
    <property type="match status" value="1"/>
</dbReference>
<dbReference type="Gene3D" id="3.40.50.10490">
    <property type="entry name" value="Glucose-6-phosphate isomerase like protein, domain 1"/>
    <property type="match status" value="2"/>
</dbReference>
<dbReference type="HAMAP" id="MF_00473">
    <property type="entry name" value="G6P_isomerase"/>
    <property type="match status" value="1"/>
</dbReference>
<dbReference type="InterPro" id="IPR001672">
    <property type="entry name" value="G6P_Isomerase"/>
</dbReference>
<dbReference type="InterPro" id="IPR023096">
    <property type="entry name" value="G6P_Isomerase_C"/>
</dbReference>
<dbReference type="InterPro" id="IPR018189">
    <property type="entry name" value="Phosphoglucose_isomerase_CS"/>
</dbReference>
<dbReference type="InterPro" id="IPR046348">
    <property type="entry name" value="SIS_dom_sf"/>
</dbReference>
<dbReference type="InterPro" id="IPR035476">
    <property type="entry name" value="SIS_PGI_1"/>
</dbReference>
<dbReference type="InterPro" id="IPR035482">
    <property type="entry name" value="SIS_PGI_2"/>
</dbReference>
<dbReference type="NCBIfam" id="NF001211">
    <property type="entry name" value="PRK00179.1"/>
    <property type="match status" value="1"/>
</dbReference>
<dbReference type="PANTHER" id="PTHR11469">
    <property type="entry name" value="GLUCOSE-6-PHOSPHATE ISOMERASE"/>
    <property type="match status" value="1"/>
</dbReference>
<dbReference type="PANTHER" id="PTHR11469:SF1">
    <property type="entry name" value="GLUCOSE-6-PHOSPHATE ISOMERASE"/>
    <property type="match status" value="1"/>
</dbReference>
<dbReference type="Pfam" id="PF00342">
    <property type="entry name" value="PGI"/>
    <property type="match status" value="1"/>
</dbReference>
<dbReference type="PRINTS" id="PR00662">
    <property type="entry name" value="G6PISOMERASE"/>
</dbReference>
<dbReference type="SUPFAM" id="SSF53697">
    <property type="entry name" value="SIS domain"/>
    <property type="match status" value="1"/>
</dbReference>
<dbReference type="PROSITE" id="PS00765">
    <property type="entry name" value="P_GLUCOSE_ISOMERASE_1"/>
    <property type="match status" value="1"/>
</dbReference>
<dbReference type="PROSITE" id="PS00174">
    <property type="entry name" value="P_GLUCOSE_ISOMERASE_2"/>
    <property type="match status" value="1"/>
</dbReference>
<dbReference type="PROSITE" id="PS51463">
    <property type="entry name" value="P_GLUCOSE_ISOMERASE_3"/>
    <property type="match status" value="1"/>
</dbReference>
<protein>
    <recommendedName>
        <fullName evidence="1">Glucose-6-phosphate isomerase</fullName>
        <shortName evidence="1">GPI</shortName>
        <ecNumber evidence="1">5.3.1.9</ecNumber>
    </recommendedName>
    <alternativeName>
        <fullName evidence="1">Phosphoglucose isomerase</fullName>
        <shortName evidence="1">PGI</shortName>
    </alternativeName>
    <alternativeName>
        <fullName evidence="1">Phosphohexose isomerase</fullName>
        <shortName evidence="1">PHI</shortName>
    </alternativeName>
</protein>